<evidence type="ECO:0000255" key="1">
    <source>
        <dbReference type="HAMAP-Rule" id="MF_01346"/>
    </source>
</evidence>
<comment type="function">
    <text evidence="1">Produces ATP from ADP in the presence of a proton gradient across the membrane. The alpha chain is a regulatory subunit.</text>
</comment>
<comment type="catalytic activity">
    <reaction evidence="1">
        <text>ATP + H2O + 4 H(+)(in) = ADP + phosphate + 5 H(+)(out)</text>
        <dbReference type="Rhea" id="RHEA:57720"/>
        <dbReference type="ChEBI" id="CHEBI:15377"/>
        <dbReference type="ChEBI" id="CHEBI:15378"/>
        <dbReference type="ChEBI" id="CHEBI:30616"/>
        <dbReference type="ChEBI" id="CHEBI:43474"/>
        <dbReference type="ChEBI" id="CHEBI:456216"/>
        <dbReference type="EC" id="7.1.2.2"/>
    </reaction>
</comment>
<comment type="subunit">
    <text evidence="1">F-type ATPases have 2 components, CF(1) - the catalytic core - and CF(0) - the membrane proton channel. CF(1) has five subunits: alpha(3), beta(3), gamma(1), delta(1), epsilon(1). CF(0) has three main subunits: a(1), b(2) and c(9-12). The alpha and beta chains form an alternating ring which encloses part of the gamma chain. CF(1) is attached to CF(0) by a central stalk formed by the gamma and epsilon chains, while a peripheral stalk is formed by the delta and b chains.</text>
</comment>
<comment type="subcellular location">
    <subcellularLocation>
        <location evidence="1">Cell inner membrane</location>
        <topology evidence="1">Peripheral membrane protein</topology>
    </subcellularLocation>
</comment>
<comment type="similarity">
    <text evidence="1">Belongs to the ATPase alpha/beta chains family.</text>
</comment>
<keyword id="KW-0066">ATP synthesis</keyword>
<keyword id="KW-0067">ATP-binding</keyword>
<keyword id="KW-0997">Cell inner membrane</keyword>
<keyword id="KW-1003">Cell membrane</keyword>
<keyword id="KW-0139">CF(1)</keyword>
<keyword id="KW-0375">Hydrogen ion transport</keyword>
<keyword id="KW-0406">Ion transport</keyword>
<keyword id="KW-0472">Membrane</keyword>
<keyword id="KW-0547">Nucleotide-binding</keyword>
<keyword id="KW-1185">Reference proteome</keyword>
<keyword id="KW-1278">Translocase</keyword>
<keyword id="KW-0813">Transport</keyword>
<name>ATPA_OLEA2</name>
<sequence>MQIKTEEISQIIESQIQNYEQRVEMSETGTVLYVGDGIARVYGVRNAMAMELLEFPGGLMGMVLNLEEDNVGVALLGPDTDIKEGDPVKRTGKIFSVPVGDAVMGRVLNPLGQPIDGEGPVDSKEFRPVELKAPGIIARKSVHEPMPTGIKAIDAMTPIGRGQRELVIGDRQTGKTAVCIDAILAQKNTDIHCFYVAIGQKRSTVALVADTLKKHGAMEYTTIISATASEPAPLQFIAAYAGCAMAEYYRDSGKHALIVYDDLSKQATAYRQMSLLLRRPPGREAFPGDVFYLHSRLLERAAKVNDSLGAGSLTALPIIETQAGDVSAYIPTNVISITDGQVYLEPNLFNAGIRPAINVGLSVSRVGGAAQIKAMKQVAGTMRLDLAQYRELAAFAQFGSDLDKATQAKLNRGARLVELLKQPQYQPMPFNEQVASMYAATRGFMDDVPVASIRKFEAEYIEFLRDAKGDILKDLDEKKAIDNDIEGRMKAALEEFKKGFTA</sequence>
<accession>Q313V8</accession>
<reference key="1">
    <citation type="journal article" date="2011" name="J. Bacteriol.">
        <title>Complete genome sequence and updated annotation of Desulfovibrio alaskensis G20.</title>
        <authorList>
            <person name="Hauser L.J."/>
            <person name="Land M.L."/>
            <person name="Brown S.D."/>
            <person name="Larimer F."/>
            <person name="Keller K.L."/>
            <person name="Rapp-Giles B.J."/>
            <person name="Price M.N."/>
            <person name="Lin M."/>
            <person name="Bruce D.C."/>
            <person name="Detter J.C."/>
            <person name="Tapia R."/>
            <person name="Han C.S."/>
            <person name="Goodwin L.A."/>
            <person name="Cheng J.F."/>
            <person name="Pitluck S."/>
            <person name="Copeland A."/>
            <person name="Lucas S."/>
            <person name="Nolan M."/>
            <person name="Lapidus A.L."/>
            <person name="Palumbo A.V."/>
            <person name="Wall J.D."/>
        </authorList>
    </citation>
    <scope>NUCLEOTIDE SEQUENCE [LARGE SCALE GENOMIC DNA]</scope>
    <source>
        <strain>ATCC BAA-1058 / DSM 17464 / G20</strain>
    </source>
</reference>
<dbReference type="EC" id="7.1.2.2" evidence="1"/>
<dbReference type="EMBL" id="CP000112">
    <property type="protein sequence ID" value="ABB37788.1"/>
    <property type="molecule type" value="Genomic_DNA"/>
</dbReference>
<dbReference type="RefSeq" id="WP_011367029.1">
    <property type="nucleotide sequence ID" value="NC_007519.1"/>
</dbReference>
<dbReference type="SMR" id="Q313V8"/>
<dbReference type="STRING" id="207559.Dde_0987"/>
<dbReference type="KEGG" id="dde:Dde_0987"/>
<dbReference type="eggNOG" id="COG0056">
    <property type="taxonomic scope" value="Bacteria"/>
</dbReference>
<dbReference type="HOGENOM" id="CLU_010091_2_1_7"/>
<dbReference type="Proteomes" id="UP000002710">
    <property type="component" value="Chromosome"/>
</dbReference>
<dbReference type="GO" id="GO:0005886">
    <property type="term" value="C:plasma membrane"/>
    <property type="evidence" value="ECO:0007669"/>
    <property type="project" value="UniProtKB-SubCell"/>
</dbReference>
<dbReference type="GO" id="GO:0045259">
    <property type="term" value="C:proton-transporting ATP synthase complex"/>
    <property type="evidence" value="ECO:0007669"/>
    <property type="project" value="UniProtKB-KW"/>
</dbReference>
<dbReference type="GO" id="GO:0043531">
    <property type="term" value="F:ADP binding"/>
    <property type="evidence" value="ECO:0007669"/>
    <property type="project" value="TreeGrafter"/>
</dbReference>
<dbReference type="GO" id="GO:0005524">
    <property type="term" value="F:ATP binding"/>
    <property type="evidence" value="ECO:0007669"/>
    <property type="project" value="UniProtKB-UniRule"/>
</dbReference>
<dbReference type="GO" id="GO:0046933">
    <property type="term" value="F:proton-transporting ATP synthase activity, rotational mechanism"/>
    <property type="evidence" value="ECO:0007669"/>
    <property type="project" value="UniProtKB-UniRule"/>
</dbReference>
<dbReference type="CDD" id="cd18113">
    <property type="entry name" value="ATP-synt_F1_alpha_C"/>
    <property type="match status" value="1"/>
</dbReference>
<dbReference type="CDD" id="cd18116">
    <property type="entry name" value="ATP-synt_F1_alpha_N"/>
    <property type="match status" value="1"/>
</dbReference>
<dbReference type="CDD" id="cd01132">
    <property type="entry name" value="F1-ATPase_alpha_CD"/>
    <property type="match status" value="1"/>
</dbReference>
<dbReference type="FunFam" id="1.20.150.20:FF:000001">
    <property type="entry name" value="ATP synthase subunit alpha"/>
    <property type="match status" value="1"/>
</dbReference>
<dbReference type="FunFam" id="2.40.30.20:FF:000001">
    <property type="entry name" value="ATP synthase subunit alpha"/>
    <property type="match status" value="1"/>
</dbReference>
<dbReference type="FunFam" id="3.40.50.300:FF:000002">
    <property type="entry name" value="ATP synthase subunit alpha"/>
    <property type="match status" value="1"/>
</dbReference>
<dbReference type="Gene3D" id="2.40.30.20">
    <property type="match status" value="1"/>
</dbReference>
<dbReference type="Gene3D" id="1.20.150.20">
    <property type="entry name" value="ATP synthase alpha/beta chain, C-terminal domain"/>
    <property type="match status" value="1"/>
</dbReference>
<dbReference type="Gene3D" id="3.40.50.300">
    <property type="entry name" value="P-loop containing nucleotide triphosphate hydrolases"/>
    <property type="match status" value="1"/>
</dbReference>
<dbReference type="HAMAP" id="MF_01346">
    <property type="entry name" value="ATP_synth_alpha_bact"/>
    <property type="match status" value="1"/>
</dbReference>
<dbReference type="InterPro" id="IPR023366">
    <property type="entry name" value="ATP_synth_asu-like_sf"/>
</dbReference>
<dbReference type="InterPro" id="IPR000793">
    <property type="entry name" value="ATP_synth_asu_C"/>
</dbReference>
<dbReference type="InterPro" id="IPR038376">
    <property type="entry name" value="ATP_synth_asu_C_sf"/>
</dbReference>
<dbReference type="InterPro" id="IPR033732">
    <property type="entry name" value="ATP_synth_F1_a_nt-bd_dom"/>
</dbReference>
<dbReference type="InterPro" id="IPR005294">
    <property type="entry name" value="ATP_synth_F1_asu"/>
</dbReference>
<dbReference type="InterPro" id="IPR020003">
    <property type="entry name" value="ATPase_a/bsu_AS"/>
</dbReference>
<dbReference type="InterPro" id="IPR004100">
    <property type="entry name" value="ATPase_F1/V1/A1_a/bsu_N"/>
</dbReference>
<dbReference type="InterPro" id="IPR036121">
    <property type="entry name" value="ATPase_F1/V1/A1_a/bsu_N_sf"/>
</dbReference>
<dbReference type="InterPro" id="IPR000194">
    <property type="entry name" value="ATPase_F1/V1/A1_a/bsu_nucl-bd"/>
</dbReference>
<dbReference type="InterPro" id="IPR027417">
    <property type="entry name" value="P-loop_NTPase"/>
</dbReference>
<dbReference type="NCBIfam" id="TIGR00962">
    <property type="entry name" value="atpA"/>
    <property type="match status" value="1"/>
</dbReference>
<dbReference type="NCBIfam" id="NF009884">
    <property type="entry name" value="PRK13343.1"/>
    <property type="match status" value="1"/>
</dbReference>
<dbReference type="PANTHER" id="PTHR48082">
    <property type="entry name" value="ATP SYNTHASE SUBUNIT ALPHA, MITOCHONDRIAL"/>
    <property type="match status" value="1"/>
</dbReference>
<dbReference type="PANTHER" id="PTHR48082:SF2">
    <property type="entry name" value="ATP SYNTHASE SUBUNIT ALPHA, MITOCHONDRIAL"/>
    <property type="match status" value="1"/>
</dbReference>
<dbReference type="Pfam" id="PF00006">
    <property type="entry name" value="ATP-synt_ab"/>
    <property type="match status" value="1"/>
</dbReference>
<dbReference type="Pfam" id="PF00306">
    <property type="entry name" value="ATP-synt_ab_C"/>
    <property type="match status" value="1"/>
</dbReference>
<dbReference type="Pfam" id="PF02874">
    <property type="entry name" value="ATP-synt_ab_N"/>
    <property type="match status" value="1"/>
</dbReference>
<dbReference type="PIRSF" id="PIRSF039088">
    <property type="entry name" value="F_ATPase_subunit_alpha"/>
    <property type="match status" value="1"/>
</dbReference>
<dbReference type="SUPFAM" id="SSF47917">
    <property type="entry name" value="C-terminal domain of alpha and beta subunits of F1 ATP synthase"/>
    <property type="match status" value="1"/>
</dbReference>
<dbReference type="SUPFAM" id="SSF50615">
    <property type="entry name" value="N-terminal domain of alpha and beta subunits of F1 ATP synthase"/>
    <property type="match status" value="1"/>
</dbReference>
<dbReference type="SUPFAM" id="SSF52540">
    <property type="entry name" value="P-loop containing nucleoside triphosphate hydrolases"/>
    <property type="match status" value="1"/>
</dbReference>
<dbReference type="PROSITE" id="PS00152">
    <property type="entry name" value="ATPASE_ALPHA_BETA"/>
    <property type="match status" value="1"/>
</dbReference>
<protein>
    <recommendedName>
        <fullName evidence="1">ATP synthase subunit alpha</fullName>
        <ecNumber evidence="1">7.1.2.2</ecNumber>
    </recommendedName>
    <alternativeName>
        <fullName evidence="1">ATP synthase F1 sector subunit alpha</fullName>
    </alternativeName>
    <alternativeName>
        <fullName evidence="1">F-ATPase subunit alpha</fullName>
    </alternativeName>
</protein>
<proteinExistence type="inferred from homology"/>
<organism>
    <name type="scientific">Oleidesulfovibrio alaskensis (strain ATCC BAA-1058 / DSM 17464 / G20)</name>
    <name type="common">Desulfovibrio alaskensis</name>
    <dbReference type="NCBI Taxonomy" id="207559"/>
    <lineage>
        <taxon>Bacteria</taxon>
        <taxon>Pseudomonadati</taxon>
        <taxon>Thermodesulfobacteriota</taxon>
        <taxon>Desulfovibrionia</taxon>
        <taxon>Desulfovibrionales</taxon>
        <taxon>Desulfovibrionaceae</taxon>
        <taxon>Oleidesulfovibrio</taxon>
    </lineage>
</organism>
<gene>
    <name evidence="1" type="primary">atpA</name>
    <name type="ordered locus">Dde_0987</name>
</gene>
<feature type="chain" id="PRO_0000238242" description="ATP synthase subunit alpha">
    <location>
        <begin position="1"/>
        <end position="502"/>
    </location>
</feature>
<feature type="binding site" evidence="1">
    <location>
        <begin position="169"/>
        <end position="176"/>
    </location>
    <ligand>
        <name>ATP</name>
        <dbReference type="ChEBI" id="CHEBI:30616"/>
    </ligand>
</feature>
<feature type="site" description="Required for activity" evidence="1">
    <location>
        <position position="362"/>
    </location>
</feature>